<accession>P69625</accession>
<accession>P51710</accession>
<organismHost>
    <name type="scientific">Enterococcus</name>
    <dbReference type="NCBI Taxonomy" id="1350"/>
</organismHost>
<proteinExistence type="predicted"/>
<sequence length="86" mass="9742">MTKFNLEQALQGAPVRLNNGFKAYIFADVSLLAINEPYPLIGGYAYSISSFYDNQEHQRFEECRWAKDGKCDRLSALGSIAGMWED</sequence>
<dbReference type="EMBL" id="Z71579">
    <property type="protein sequence ID" value="CAA96229.1"/>
    <property type="molecule type" value="Genomic_DNA"/>
</dbReference>
<organism>
    <name type="scientific">Haemophilus phage S2</name>
    <name type="common">Bacteriophage S2</name>
    <dbReference type="NCBI Taxonomy" id="53000"/>
    <lineage>
        <taxon>Viruses</taxon>
        <taxon>Duplodnaviria</taxon>
        <taxon>Heunggongvirae</taxon>
        <taxon>Uroviricota</taxon>
        <taxon>Caudoviricetes</taxon>
    </lineage>
</organism>
<reference key="1">
    <citation type="submission" date="1996-11" db="EMBL/GenBank/DDBJ databases">
        <authorList>
            <person name="Skowronek K."/>
            <person name="Baranowski S."/>
        </authorList>
    </citation>
    <scope>NUCLEOTIDE SEQUENCE [GENOMIC DNA]</scope>
    <source>
        <strain>Type A</strain>
    </source>
</reference>
<feature type="chain" id="PRO_0000165326" description="Uncharacterized 9.7 kDa protein in cox-rep intergenic region">
    <location>
        <begin position="1"/>
        <end position="86"/>
    </location>
</feature>
<protein>
    <recommendedName>
        <fullName>Uncharacterized 9.7 kDa protein in cox-rep intergenic region</fullName>
    </recommendedName>
    <alternativeName>
        <fullName>ORF25</fullName>
    </alternativeName>
    <alternativeName>
        <fullName>ORF9</fullName>
    </alternativeName>
</protein>
<name>YO09_BPS2</name>